<feature type="chain" id="PRO_0000085491" description="Probable Vpr-like protein">
    <location>
        <begin position="1"/>
        <end position="94"/>
    </location>
</feature>
<name>VPRL_VILV1</name>
<evidence type="ECO:0000250" key="1"/>
<evidence type="ECO:0000305" key="2"/>
<protein>
    <recommendedName>
        <fullName>Probable Vpr-like protein</fullName>
    </recommendedName>
    <alternativeName>
        <fullName>Protein S</fullName>
    </alternativeName>
    <alternativeName>
        <fullName>Protein Tat</fullName>
    </alternativeName>
</protein>
<accession>P23428</accession>
<organismHost>
    <name type="scientific">Ovis aries</name>
    <name type="common">Sheep</name>
    <dbReference type="NCBI Taxonomy" id="9940"/>
</organismHost>
<organism>
    <name type="scientific">Maedi visna virus (strain 1514 / clone LV1-1KS1)</name>
    <name type="common">MVV</name>
    <name type="synonym">Visna lentivirus</name>
    <dbReference type="NCBI Taxonomy" id="11743"/>
    <lineage>
        <taxon>Viruses</taxon>
        <taxon>Riboviria</taxon>
        <taxon>Pararnavirae</taxon>
        <taxon>Artverviricota</taxon>
        <taxon>Revtraviricetes</taxon>
        <taxon>Ortervirales</taxon>
        <taxon>Retroviridae</taxon>
        <taxon>Orthoretrovirinae</taxon>
        <taxon>Lentivirus</taxon>
        <taxon>Visna-maedi virus</taxon>
    </lineage>
</organism>
<sequence>MEEVPRRQPGGLVEAEGVFQVYEDWECWDYVSQRVPDERLQRWLAMLTNNQLRRQVIREAQIWIWKHKGAAVRRNCGCRLCNPGWGSQVRNVEL</sequence>
<gene>
    <name type="primary">tat</name>
</gene>
<dbReference type="EMBL" id="M60609">
    <property type="protein sequence ID" value="AAA17526.1"/>
    <property type="status" value="ALT_INIT"/>
    <property type="molecule type" value="Unassigned_RNA"/>
</dbReference>
<dbReference type="GO" id="GO:0042025">
    <property type="term" value="C:host cell nucleus"/>
    <property type="evidence" value="ECO:0007669"/>
    <property type="project" value="UniProtKB-SubCell"/>
</dbReference>
<dbReference type="GO" id="GO:0044423">
    <property type="term" value="C:virion component"/>
    <property type="evidence" value="ECO:0007669"/>
    <property type="project" value="UniProtKB-KW"/>
</dbReference>
<dbReference type="InterPro" id="IPR004247">
    <property type="entry name" value="Lentiviral_Vpr-like"/>
</dbReference>
<dbReference type="Pfam" id="PF02998">
    <property type="entry name" value="Lentiviral_Tat"/>
    <property type="match status" value="1"/>
</dbReference>
<comment type="function">
    <text evidence="1">Seems to function as a Vpr-like protein, since it mediates host cell cycle arrest in G2 phase. Cell cycle arrest creates a favorable environment for maximizing viral expression and production (By similarity).</text>
</comment>
<comment type="subcellular location">
    <subcellularLocation>
        <location evidence="2">Virion</location>
    </subcellularLocation>
    <subcellularLocation>
        <location>Host nucleus</location>
    </subcellularLocation>
</comment>
<comment type="caution">
    <text evidence="2">Was first thought to be the equivalent of lentiviral Tat protein, but it does not induce any transactivation of viral LTR promoter, or if any, at very low rate. The LTR promoter of this virus has a high basal activity and does apparently not need transactivation by a Tat-like protein.</text>
</comment>
<comment type="sequence caution" evidence="2">
    <conflict type="erroneous initiation">
        <sequence resource="EMBL-CDS" id="AAA17526"/>
    </conflict>
</comment>
<reference key="1">
    <citation type="journal article" date="1991" name="Virology">
        <title>Isolation of replication-competent molecular clones of visna virus.</title>
        <authorList>
            <person name="Staskus K.A."/>
            <person name="Retzel E.F."/>
            <person name="Lewis E.D."/>
            <person name="Wietgrefe S.W."/>
            <person name="Silsby J.L."/>
            <person name="Cyr S."/>
            <person name="Rank J.M."/>
            <person name="Haase A.T."/>
            <person name="Fast D."/>
            <person name="Geiser P.T."/>
            <person name="Harty J.T."/>
            <person name="Kong S.H."/>
            <person name="Cook R."/>
            <person name="Lahti C.J."/>
            <person name="Neufeld T.P."/>
            <person name="Porter T.E."/>
            <person name="Shoop E."/>
            <person name="Zachow K.R."/>
        </authorList>
    </citation>
    <scope>NUCLEOTIDE SEQUENCE</scope>
</reference>
<proteinExistence type="inferred from homology"/>
<keyword id="KW-0131">Cell cycle</keyword>
<keyword id="KW-1048">Host nucleus</keyword>
<keyword id="KW-0946">Virion</keyword>